<accession>P10251</accession>
<accession>Q2SRH3</accession>
<keyword id="KW-0067">ATP-binding</keyword>
<keyword id="KW-0963">Cytoplasm</keyword>
<keyword id="KW-0418">Kinase</keyword>
<keyword id="KW-0479">Metal-binding</keyword>
<keyword id="KW-0545">Nucleotide biosynthesis</keyword>
<keyword id="KW-0547">Nucleotide-binding</keyword>
<keyword id="KW-0808">Transferase</keyword>
<keyword id="KW-0862">Zinc</keyword>
<evidence type="ECO:0000255" key="1">
    <source>
        <dbReference type="HAMAP-Rule" id="MF_00235"/>
    </source>
</evidence>
<evidence type="ECO:0000305" key="2"/>
<protein>
    <recommendedName>
        <fullName evidence="1">Adenylate kinase</fullName>
        <shortName evidence="1">AK</shortName>
        <ecNumber evidence="1">2.7.4.3</ecNumber>
    </recommendedName>
    <alternativeName>
        <fullName evidence="1">ATP-AMP transphosphorylase</fullName>
    </alternativeName>
    <alternativeName>
        <fullName evidence="1">ATP:AMP phosphotransferase</fullName>
    </alternativeName>
    <alternativeName>
        <fullName evidence="1">Adenylate monophosphate kinase</fullName>
    </alternativeName>
</protein>
<sequence>MNIMLLGAPGCGKGTQAEQLVNKLNFIQVSTGDLMRKEISLNTTLGLKCQEYMNAGKYVPDQIVNQIVNQFLQYNNDKLIFDGYPRTLEQAKSLEKMLDLYNKKIDYVFYIDVNEQILIKRITNRLVCPLCKASFNLETRKPKQEGLCDFDNTKLVKRSDDSLDKVKIRLQTYKEQTLPLIDYFKTNSKFIEIKADNLSAEQVFNQIKGELKI</sequence>
<reference key="1">
    <citation type="journal article" date="1987" name="Mol. Gen. Genet.">
        <title>The ribosomal protein gene cluster of Mycoplasma capricolum.</title>
        <authorList>
            <person name="Ohkubo S."/>
            <person name="Muto A."/>
            <person name="Kawauchi Y."/>
            <person name="Yamao F."/>
            <person name="Osawa S."/>
        </authorList>
    </citation>
    <scope>NUCLEOTIDE SEQUENCE [GENOMIC DNA]</scope>
</reference>
<reference key="2">
    <citation type="submission" date="2005-09" db="EMBL/GenBank/DDBJ databases">
        <authorList>
            <person name="Glass J.I."/>
            <person name="Lartigue C."/>
            <person name="Pfannkoch C."/>
            <person name="Baden-Tillson H."/>
            <person name="Smith H.O."/>
            <person name="Venter J.C."/>
            <person name="Roske K."/>
            <person name="Wise K.S."/>
            <person name="Calcutt M.J."/>
            <person name="Nelson W.C."/>
            <person name="Nierman W.C."/>
        </authorList>
    </citation>
    <scope>NUCLEOTIDE SEQUENCE [LARGE SCALE GENOMIC DNA]</scope>
    <source>
        <strain>California kid / ATCC 27343 / NCTC 10154</strain>
    </source>
</reference>
<organism>
    <name type="scientific">Mycoplasma capricolum subsp. capricolum (strain California kid / ATCC 27343 / NCTC 10154)</name>
    <dbReference type="NCBI Taxonomy" id="340047"/>
    <lineage>
        <taxon>Bacteria</taxon>
        <taxon>Bacillati</taxon>
        <taxon>Mycoplasmatota</taxon>
        <taxon>Mollicutes</taxon>
        <taxon>Mycoplasmataceae</taxon>
        <taxon>Mycoplasma</taxon>
    </lineage>
</organism>
<dbReference type="EC" id="2.7.4.3" evidence="1"/>
<dbReference type="EMBL" id="X06414">
    <property type="protein sequence ID" value="CAA29724.1"/>
    <property type="molecule type" value="Genomic_DNA"/>
</dbReference>
<dbReference type="EMBL" id="CP000123">
    <property type="protein sequence ID" value="ABC01363.1"/>
    <property type="molecule type" value="Genomic_DNA"/>
</dbReference>
<dbReference type="PIR" id="S02851">
    <property type="entry name" value="KIYMC"/>
</dbReference>
<dbReference type="RefSeq" id="WP_011387531.1">
    <property type="nucleotide sequence ID" value="NC_007633.1"/>
</dbReference>
<dbReference type="SMR" id="P10251"/>
<dbReference type="GeneID" id="23778370"/>
<dbReference type="KEGG" id="mcp:MCAP_0676"/>
<dbReference type="HOGENOM" id="CLU_032354_1_2_14"/>
<dbReference type="PhylomeDB" id="P10251"/>
<dbReference type="UniPathway" id="UPA00588">
    <property type="reaction ID" value="UER00649"/>
</dbReference>
<dbReference type="Proteomes" id="UP000001928">
    <property type="component" value="Chromosome"/>
</dbReference>
<dbReference type="GO" id="GO:0005737">
    <property type="term" value="C:cytoplasm"/>
    <property type="evidence" value="ECO:0007669"/>
    <property type="project" value="UniProtKB-SubCell"/>
</dbReference>
<dbReference type="GO" id="GO:0004017">
    <property type="term" value="F:adenylate kinase activity"/>
    <property type="evidence" value="ECO:0007669"/>
    <property type="project" value="UniProtKB-UniRule"/>
</dbReference>
<dbReference type="GO" id="GO:0005524">
    <property type="term" value="F:ATP binding"/>
    <property type="evidence" value="ECO:0007669"/>
    <property type="project" value="UniProtKB-UniRule"/>
</dbReference>
<dbReference type="GO" id="GO:0008270">
    <property type="term" value="F:zinc ion binding"/>
    <property type="evidence" value="ECO:0007669"/>
    <property type="project" value="UniProtKB-UniRule"/>
</dbReference>
<dbReference type="GO" id="GO:0044209">
    <property type="term" value="P:AMP salvage"/>
    <property type="evidence" value="ECO:0007669"/>
    <property type="project" value="UniProtKB-UniRule"/>
</dbReference>
<dbReference type="CDD" id="cd01428">
    <property type="entry name" value="ADK"/>
    <property type="match status" value="1"/>
</dbReference>
<dbReference type="FunFam" id="3.40.50.300:FF:000106">
    <property type="entry name" value="Adenylate kinase mitochondrial"/>
    <property type="match status" value="1"/>
</dbReference>
<dbReference type="Gene3D" id="3.40.50.300">
    <property type="entry name" value="P-loop containing nucleotide triphosphate hydrolases"/>
    <property type="match status" value="1"/>
</dbReference>
<dbReference type="HAMAP" id="MF_00235">
    <property type="entry name" value="Adenylate_kinase_Adk"/>
    <property type="match status" value="1"/>
</dbReference>
<dbReference type="InterPro" id="IPR006259">
    <property type="entry name" value="Adenyl_kin_sub"/>
</dbReference>
<dbReference type="InterPro" id="IPR000850">
    <property type="entry name" value="Adenylat/UMP-CMP_kin"/>
</dbReference>
<dbReference type="InterPro" id="IPR033690">
    <property type="entry name" value="Adenylat_kinase_CS"/>
</dbReference>
<dbReference type="InterPro" id="IPR007862">
    <property type="entry name" value="Adenylate_kinase_lid-dom"/>
</dbReference>
<dbReference type="InterPro" id="IPR027417">
    <property type="entry name" value="P-loop_NTPase"/>
</dbReference>
<dbReference type="NCBIfam" id="TIGR01351">
    <property type="entry name" value="adk"/>
    <property type="match status" value="1"/>
</dbReference>
<dbReference type="NCBIfam" id="NF001381">
    <property type="entry name" value="PRK00279.1-3"/>
    <property type="match status" value="1"/>
</dbReference>
<dbReference type="PANTHER" id="PTHR23359">
    <property type="entry name" value="NUCLEOTIDE KINASE"/>
    <property type="match status" value="1"/>
</dbReference>
<dbReference type="Pfam" id="PF00406">
    <property type="entry name" value="ADK"/>
    <property type="match status" value="1"/>
</dbReference>
<dbReference type="Pfam" id="PF05191">
    <property type="entry name" value="ADK_lid"/>
    <property type="match status" value="1"/>
</dbReference>
<dbReference type="PRINTS" id="PR00094">
    <property type="entry name" value="ADENYLTKNASE"/>
</dbReference>
<dbReference type="SUPFAM" id="SSF52540">
    <property type="entry name" value="P-loop containing nucleoside triphosphate hydrolases"/>
    <property type="match status" value="1"/>
</dbReference>
<dbReference type="PROSITE" id="PS00113">
    <property type="entry name" value="ADENYLATE_KINASE"/>
    <property type="match status" value="1"/>
</dbReference>
<name>KAD_MYCCT</name>
<feature type="chain" id="PRO_0000158795" description="Adenylate kinase">
    <location>
        <begin position="1"/>
        <end position="213"/>
    </location>
</feature>
<feature type="region of interest" description="NMP" evidence="1">
    <location>
        <begin position="30"/>
        <end position="59"/>
    </location>
</feature>
<feature type="region of interest" description="LID" evidence="1">
    <location>
        <begin position="124"/>
        <end position="161"/>
    </location>
</feature>
<feature type="binding site" evidence="1">
    <location>
        <begin position="10"/>
        <end position="15"/>
    </location>
    <ligand>
        <name>ATP</name>
        <dbReference type="ChEBI" id="CHEBI:30616"/>
    </ligand>
</feature>
<feature type="binding site" evidence="1">
    <location>
        <position position="31"/>
    </location>
    <ligand>
        <name>AMP</name>
        <dbReference type="ChEBI" id="CHEBI:456215"/>
    </ligand>
</feature>
<feature type="binding site" evidence="1">
    <location>
        <position position="36"/>
    </location>
    <ligand>
        <name>AMP</name>
        <dbReference type="ChEBI" id="CHEBI:456215"/>
    </ligand>
</feature>
<feature type="binding site" evidence="1">
    <location>
        <begin position="57"/>
        <end position="59"/>
    </location>
    <ligand>
        <name>AMP</name>
        <dbReference type="ChEBI" id="CHEBI:456215"/>
    </ligand>
</feature>
<feature type="binding site" evidence="1">
    <location>
        <begin position="83"/>
        <end position="86"/>
    </location>
    <ligand>
        <name>AMP</name>
        <dbReference type="ChEBI" id="CHEBI:456215"/>
    </ligand>
</feature>
<feature type="binding site" evidence="1">
    <location>
        <position position="90"/>
    </location>
    <ligand>
        <name>AMP</name>
        <dbReference type="ChEBI" id="CHEBI:456215"/>
    </ligand>
</feature>
<feature type="binding site" evidence="1">
    <location>
        <position position="125"/>
    </location>
    <ligand>
        <name>ATP</name>
        <dbReference type="ChEBI" id="CHEBI:30616"/>
    </ligand>
</feature>
<feature type="binding site" evidence="1">
    <location>
        <position position="128"/>
    </location>
    <ligand>
        <name>Zn(2+)</name>
        <dbReference type="ChEBI" id="CHEBI:29105"/>
        <note>structural</note>
    </ligand>
</feature>
<feature type="binding site" evidence="1">
    <location>
        <position position="131"/>
    </location>
    <ligand>
        <name>Zn(2+)</name>
        <dbReference type="ChEBI" id="CHEBI:29105"/>
        <note>structural</note>
    </ligand>
</feature>
<feature type="binding site" evidence="1">
    <location>
        <begin position="134"/>
        <end position="135"/>
    </location>
    <ligand>
        <name>ATP</name>
        <dbReference type="ChEBI" id="CHEBI:30616"/>
    </ligand>
</feature>
<feature type="binding site" evidence="1">
    <location>
        <position position="148"/>
    </location>
    <ligand>
        <name>Zn(2+)</name>
        <dbReference type="ChEBI" id="CHEBI:29105"/>
        <note>structural</note>
    </ligand>
</feature>
<feature type="binding site" evidence="1">
    <location>
        <position position="151"/>
    </location>
    <ligand>
        <name>Zn(2+)</name>
        <dbReference type="ChEBI" id="CHEBI:29105"/>
        <note>structural</note>
    </ligand>
</feature>
<feature type="binding site" evidence="1">
    <location>
        <position position="158"/>
    </location>
    <ligand>
        <name>AMP</name>
        <dbReference type="ChEBI" id="CHEBI:456215"/>
    </ligand>
</feature>
<feature type="binding site" evidence="1">
    <location>
        <position position="169"/>
    </location>
    <ligand>
        <name>AMP</name>
        <dbReference type="ChEBI" id="CHEBI:456215"/>
    </ligand>
</feature>
<feature type="binding site" evidence="1">
    <location>
        <position position="197"/>
    </location>
    <ligand>
        <name>ATP</name>
        <dbReference type="ChEBI" id="CHEBI:30616"/>
    </ligand>
</feature>
<feature type="sequence conflict" description="In Ref. 1; CAA29724." evidence="2" ref="1">
    <original>S</original>
    <variation>L</variation>
    <location>
        <position position="93"/>
    </location>
</feature>
<comment type="function">
    <text evidence="1">Catalyzes the reversible transfer of the terminal phosphate group between ATP and AMP. Plays an important role in cellular energy homeostasis and in adenine nucleotide metabolism.</text>
</comment>
<comment type="catalytic activity">
    <reaction evidence="1">
        <text>AMP + ATP = 2 ADP</text>
        <dbReference type="Rhea" id="RHEA:12973"/>
        <dbReference type="ChEBI" id="CHEBI:30616"/>
        <dbReference type="ChEBI" id="CHEBI:456215"/>
        <dbReference type="ChEBI" id="CHEBI:456216"/>
        <dbReference type="EC" id="2.7.4.3"/>
    </reaction>
</comment>
<comment type="pathway">
    <text evidence="1">Purine metabolism; AMP biosynthesis via salvage pathway; AMP from ADP: step 1/1.</text>
</comment>
<comment type="subunit">
    <text evidence="1">Monomer.</text>
</comment>
<comment type="subcellular location">
    <subcellularLocation>
        <location evidence="1">Cytoplasm</location>
    </subcellularLocation>
</comment>
<comment type="domain">
    <text evidence="1">Consists of three domains, a large central CORE domain and two small peripheral domains, NMPbind and LID, which undergo movements during catalysis. The LID domain closes over the site of phosphoryl transfer upon ATP binding. Assembling and dissambling the active center during each catalytic cycle provides an effective means to prevent ATP hydrolysis. Some bacteria have evolved a zinc-coordinating structure that stabilizes the LID domain.</text>
</comment>
<comment type="similarity">
    <text evidence="1">Belongs to the adenylate kinase family.</text>
</comment>
<gene>
    <name evidence="1" type="primary">adk</name>
    <name type="ordered locus">MCAP_0676</name>
</gene>
<proteinExistence type="inferred from homology"/>